<accession>Q96PZ2</accession>
<accession>A8K5Y8</accession>
<accession>Q5RKS9</accession>
<accession>Q5XKM2</accession>
<accession>Q68DK9</accession>
<accession>Q6IPR7</accession>
<accession>Q9H5Y1</accession>
<organism>
    <name type="scientific">Homo sapiens</name>
    <name type="common">Human</name>
    <dbReference type="NCBI Taxonomy" id="9606"/>
    <lineage>
        <taxon>Eukaryota</taxon>
        <taxon>Metazoa</taxon>
        <taxon>Chordata</taxon>
        <taxon>Craniata</taxon>
        <taxon>Vertebrata</taxon>
        <taxon>Euteleostomi</taxon>
        <taxon>Mammalia</taxon>
        <taxon>Eutheria</taxon>
        <taxon>Euarchontoglires</taxon>
        <taxon>Primates</taxon>
        <taxon>Haplorrhini</taxon>
        <taxon>Catarrhini</taxon>
        <taxon>Hominidae</taxon>
        <taxon>Homo</taxon>
    </lineage>
</organism>
<keyword id="KW-0002">3D-structure</keyword>
<keyword id="KW-0068">Autocatalytic cleavage</keyword>
<keyword id="KW-0158">Chromosome</keyword>
<keyword id="KW-0963">Cytoplasm</keyword>
<keyword id="KW-0225">Disease variant</keyword>
<keyword id="KW-0227">DNA damage</keyword>
<keyword id="KW-0234">DNA repair</keyword>
<keyword id="KW-0235">DNA replication</keyword>
<keyword id="KW-0238">DNA-binding</keyword>
<keyword id="KW-0242">Dwarfism</keyword>
<keyword id="KW-0945">Host-virus interaction</keyword>
<keyword id="KW-0378">Hydrolase</keyword>
<keyword id="KW-1017">Isopeptide bond</keyword>
<keyword id="KW-0539">Nucleus</keyword>
<keyword id="KW-0597">Phosphoprotein</keyword>
<keyword id="KW-0645">Protease</keyword>
<keyword id="KW-1267">Proteomics identification</keyword>
<keyword id="KW-1185">Reference proteome</keyword>
<keyword id="KW-0832">Ubl conjugation</keyword>
<sequence length="611" mass="70196">MSCKKQRSRKHSVNEKCNMKIEHYFSPVSKEQQNNCSTSLMRMESRGDPRATTNTQAQRFHSPKKNPEDQTMPQNRTIYVTLKVNHRRNQDMKLKLTHSENSSLYMALNTLQAVRKEIETHQGQEMLVRGTEGIKEYINLGMPLSCFPEGGQVVITFSQSKSKQKEDNHIFGRQDKASTECVKFYIHAIGIGKCKRRIVKCGKLHKKGRKLCVYAFKGETIKDALCKDGRFLSFLENDDWKLIENNDTILESTQPVDELEGRYFQVEVEKRMVPSAAASQNPESEKRNTCVLREQIVAQYPSLKRESEKIIENFKKKMKVKNGETLFELHRTTFGKVTKNSSSIKVVKLLVRLSDSVGYLFWDSATTGYATCFVFKGLFILTCRHVIDSIVGDGIEPSKWATIIGQCVRVTFGYEELKDKETNYFFVEPWFEIHNEELDYAVLKLKENGQQVPMELYNGITPVPLSGLIHIIGHPYGEKKQIDACAVIPQGQRAKKCQERVQSKKAESPEYVHMYTQRSFQKIVHNPDVITYDTEFFFGASGSPVFDSKGSLVAMHAAGFAYTYQNETRSIIEFGSTMESILLDIKQRHKPWYEEVFVNQQDVEMMSDEDL</sequence>
<reference key="1">
    <citation type="journal article" date="2001" name="DNA Res.">
        <title>Prediction of the coding sequences of unidentified human genes. XXI. The complete sequences of 60 new cDNA clones from brain which code for large proteins.</title>
        <authorList>
            <person name="Nagase T."/>
            <person name="Kikuno R."/>
            <person name="Ohara O."/>
        </authorList>
    </citation>
    <scope>NUCLEOTIDE SEQUENCE [LARGE SCALE MRNA]</scope>
    <source>
        <tissue>Brain</tissue>
    </source>
</reference>
<reference key="2">
    <citation type="journal article" date="2004" name="Nat. Genet.">
        <title>Complete sequencing and characterization of 21,243 full-length human cDNAs.</title>
        <authorList>
            <person name="Ota T."/>
            <person name="Suzuki Y."/>
            <person name="Nishikawa T."/>
            <person name="Otsuki T."/>
            <person name="Sugiyama T."/>
            <person name="Irie R."/>
            <person name="Wakamatsu A."/>
            <person name="Hayashi K."/>
            <person name="Sato H."/>
            <person name="Nagai K."/>
            <person name="Kimura K."/>
            <person name="Makita H."/>
            <person name="Sekine M."/>
            <person name="Obayashi M."/>
            <person name="Nishi T."/>
            <person name="Shibahara T."/>
            <person name="Tanaka T."/>
            <person name="Ishii S."/>
            <person name="Yamamoto J."/>
            <person name="Saito K."/>
            <person name="Kawai Y."/>
            <person name="Isono Y."/>
            <person name="Nakamura Y."/>
            <person name="Nagahari K."/>
            <person name="Murakami K."/>
            <person name="Yasuda T."/>
            <person name="Iwayanagi T."/>
            <person name="Wagatsuma M."/>
            <person name="Shiratori A."/>
            <person name="Sudo H."/>
            <person name="Hosoiri T."/>
            <person name="Kaku Y."/>
            <person name="Kodaira H."/>
            <person name="Kondo H."/>
            <person name="Sugawara M."/>
            <person name="Takahashi M."/>
            <person name="Kanda K."/>
            <person name="Yokoi T."/>
            <person name="Furuya T."/>
            <person name="Kikkawa E."/>
            <person name="Omura Y."/>
            <person name="Abe K."/>
            <person name="Kamihara K."/>
            <person name="Katsuta N."/>
            <person name="Sato K."/>
            <person name="Tanikawa M."/>
            <person name="Yamazaki M."/>
            <person name="Ninomiya K."/>
            <person name="Ishibashi T."/>
            <person name="Yamashita H."/>
            <person name="Murakawa K."/>
            <person name="Fujimori K."/>
            <person name="Tanai H."/>
            <person name="Kimata M."/>
            <person name="Watanabe M."/>
            <person name="Hiraoka S."/>
            <person name="Chiba Y."/>
            <person name="Ishida S."/>
            <person name="Ono Y."/>
            <person name="Takiguchi S."/>
            <person name="Watanabe S."/>
            <person name="Yosida M."/>
            <person name="Hotuta T."/>
            <person name="Kusano J."/>
            <person name="Kanehori K."/>
            <person name="Takahashi-Fujii A."/>
            <person name="Hara H."/>
            <person name="Tanase T.-O."/>
            <person name="Nomura Y."/>
            <person name="Togiya S."/>
            <person name="Komai F."/>
            <person name="Hara R."/>
            <person name="Takeuchi K."/>
            <person name="Arita M."/>
            <person name="Imose N."/>
            <person name="Musashino K."/>
            <person name="Yuuki H."/>
            <person name="Oshima A."/>
            <person name="Sasaki N."/>
            <person name="Aotsuka S."/>
            <person name="Yoshikawa Y."/>
            <person name="Matsunawa H."/>
            <person name="Ichihara T."/>
            <person name="Shiohata N."/>
            <person name="Sano S."/>
            <person name="Moriya S."/>
            <person name="Momiyama H."/>
            <person name="Satoh N."/>
            <person name="Takami S."/>
            <person name="Terashima Y."/>
            <person name="Suzuki O."/>
            <person name="Nakagawa S."/>
            <person name="Senoh A."/>
            <person name="Mizoguchi H."/>
            <person name="Goto Y."/>
            <person name="Shimizu F."/>
            <person name="Wakebe H."/>
            <person name="Hishigaki H."/>
            <person name="Watanabe T."/>
            <person name="Sugiyama A."/>
            <person name="Takemoto M."/>
            <person name="Kawakami B."/>
            <person name="Yamazaki M."/>
            <person name="Watanabe K."/>
            <person name="Kumagai A."/>
            <person name="Itakura S."/>
            <person name="Fukuzumi Y."/>
            <person name="Fujimori Y."/>
            <person name="Komiyama M."/>
            <person name="Tashiro H."/>
            <person name="Tanigami A."/>
            <person name="Fujiwara T."/>
            <person name="Ono T."/>
            <person name="Yamada K."/>
            <person name="Fujii Y."/>
            <person name="Ozaki K."/>
            <person name="Hirao M."/>
            <person name="Ohmori Y."/>
            <person name="Kawabata A."/>
            <person name="Hikiji T."/>
            <person name="Kobatake N."/>
            <person name="Inagaki H."/>
            <person name="Ikema Y."/>
            <person name="Okamoto S."/>
            <person name="Okitani R."/>
            <person name="Kawakami T."/>
            <person name="Noguchi S."/>
            <person name="Itoh T."/>
            <person name="Shigeta K."/>
            <person name="Senba T."/>
            <person name="Matsumura K."/>
            <person name="Nakajima Y."/>
            <person name="Mizuno T."/>
            <person name="Morinaga M."/>
            <person name="Sasaki M."/>
            <person name="Togashi T."/>
            <person name="Oyama M."/>
            <person name="Hata H."/>
            <person name="Watanabe M."/>
            <person name="Komatsu T."/>
            <person name="Mizushima-Sugano J."/>
            <person name="Satoh T."/>
            <person name="Shirai Y."/>
            <person name="Takahashi Y."/>
            <person name="Nakagawa K."/>
            <person name="Okumura K."/>
            <person name="Nagase T."/>
            <person name="Nomura N."/>
            <person name="Kikuchi H."/>
            <person name="Masuho Y."/>
            <person name="Yamashita R."/>
            <person name="Nakai K."/>
            <person name="Yada T."/>
            <person name="Nakamura Y."/>
            <person name="Ohara O."/>
            <person name="Isogai T."/>
            <person name="Sugano S."/>
        </authorList>
    </citation>
    <scope>NUCLEOTIDE SEQUENCE [LARGE SCALE MRNA]</scope>
    <source>
        <tissue>Brain</tissue>
        <tissue>Ileal mucosa</tissue>
    </source>
</reference>
<reference key="3">
    <citation type="journal article" date="2007" name="BMC Genomics">
        <title>The full-ORF clone resource of the German cDNA consortium.</title>
        <authorList>
            <person name="Bechtel S."/>
            <person name="Rosenfelder H."/>
            <person name="Duda A."/>
            <person name="Schmidt C.P."/>
            <person name="Ernst U."/>
            <person name="Wellenreuther R."/>
            <person name="Mehrle A."/>
            <person name="Schuster C."/>
            <person name="Bahr A."/>
            <person name="Bloecker H."/>
            <person name="Heubner D."/>
            <person name="Hoerlein A."/>
            <person name="Michel G."/>
            <person name="Wedler H."/>
            <person name="Koehrer K."/>
            <person name="Ottenwaelder B."/>
            <person name="Poustka A."/>
            <person name="Wiemann S."/>
            <person name="Schupp I."/>
        </authorList>
    </citation>
    <scope>NUCLEOTIDE SEQUENCE [LARGE SCALE MRNA]</scope>
    <source>
        <tissue>Uterine endothelium</tissue>
    </source>
</reference>
<reference key="4">
    <citation type="journal article" date="2004" name="Genome Res.">
        <title>The status, quality, and expansion of the NIH full-length cDNA project: the Mammalian Gene Collection (MGC).</title>
        <authorList>
            <consortium name="The MGC Project Team"/>
        </authorList>
    </citation>
    <scope>NUCLEOTIDE SEQUENCE [LARGE SCALE MRNA]</scope>
    <source>
        <tissue>Lung</tissue>
        <tissue>Testis</tissue>
    </source>
</reference>
<reference key="5">
    <citation type="journal article" date="2012" name="PLoS Pathog.">
        <title>Identification of FAM111A as an SV40 host range restriction and adenovirus helper factor.</title>
        <authorList>
            <person name="Fine D.A."/>
            <person name="Rozenblatt-Rosen O."/>
            <person name="Padi M."/>
            <person name="Korkhin A."/>
            <person name="James R.L."/>
            <person name="Adelmant G."/>
            <person name="Yoon R."/>
            <person name="Guo L."/>
            <person name="Berrios C."/>
            <person name="Zhang Y."/>
            <person name="Calderwood M.A."/>
            <person name="Velmurgan S."/>
            <person name="Cheng J."/>
            <person name="Marto J.A."/>
            <person name="Hill D.E."/>
            <person name="Cusick M.E."/>
            <person name="Vidal M."/>
            <person name="Florens L."/>
            <person name="Washburn M.P."/>
            <person name="Litovchick L."/>
            <person name="DeCaprio J.A."/>
        </authorList>
    </citation>
    <scope>FUNCTION</scope>
    <scope>SUBCELLULAR LOCATION</scope>
    <scope>INDUCTION</scope>
    <scope>INTERACTION WITH SV40 VIRUS LARGE T ANTIGEN (MICROBIAL INFECTION)</scope>
</reference>
<reference key="6">
    <citation type="journal article" date="2013" name="J. Proteome Res.">
        <title>Toward a comprehensive characterization of a human cancer cell phosphoproteome.</title>
        <authorList>
            <person name="Zhou H."/>
            <person name="Di Palma S."/>
            <person name="Preisinger C."/>
            <person name="Peng M."/>
            <person name="Polat A.N."/>
            <person name="Heck A.J."/>
            <person name="Mohammed S."/>
        </authorList>
    </citation>
    <scope>PHOSPHORYLATION [LARGE SCALE ANALYSIS] AT SER-26</scope>
    <scope>IDENTIFICATION BY MASS SPECTROMETRY [LARGE SCALE ANALYSIS]</scope>
    <source>
        <tissue>Cervix carcinoma</tissue>
    </source>
</reference>
<reference key="7">
    <citation type="journal article" date="2014" name="Nat. Cell Biol.">
        <title>Nascent chromatin capture proteomics determines chromatin dynamics during DNA replication and identifies unknown fork components.</title>
        <authorList>
            <person name="Alabert C."/>
            <person name="Bukowski-Wills J.C."/>
            <person name="Lee S.B."/>
            <person name="Kustatscher G."/>
            <person name="Nakamura K."/>
            <person name="de Lima Alves F."/>
            <person name="Menard P."/>
            <person name="Mejlvang J."/>
            <person name="Rappsilber J."/>
            <person name="Groth A."/>
        </authorList>
    </citation>
    <scope>FUNCTION</scope>
    <scope>SUBCELLULAR LOCATION</scope>
    <scope>INTERACTION WITH PCNA</scope>
    <scope>MUTAGENESIS OF 24-TYR-PHE-25</scope>
</reference>
<reference key="8">
    <citation type="journal article" date="2017" name="Nat. Struct. Mol. Biol.">
        <title>Site-specific mapping of the human SUMO proteome reveals co-modification with phosphorylation.</title>
        <authorList>
            <person name="Hendriks I.A."/>
            <person name="Lyon D."/>
            <person name="Young C."/>
            <person name="Jensen L.J."/>
            <person name="Vertegaal A.C."/>
            <person name="Nielsen M.L."/>
        </authorList>
    </citation>
    <scope>SUMOYLATION [LARGE SCALE ANALYSIS] AT LYS-20; LYS-30 AND LYS-65</scope>
    <scope>IDENTIFICATION BY MASS SPECTROMETRY [LARGE SCALE ANALYSIS]</scope>
</reference>
<reference key="9">
    <citation type="journal article" date="2020" name="Nat. Commun.">
        <title>FAM111A protects replication forks from protein obstacles via its trypsin-like domain.</title>
        <authorList>
            <person name="Kojima Y."/>
            <person name="Machida Y."/>
            <person name="Palani S."/>
            <person name="Caulfield T.R."/>
            <person name="Radisky E.S."/>
            <person name="Kaufmann S.H."/>
            <person name="Machida Y.J."/>
        </authorList>
    </citation>
    <scope>FUNCTION</scope>
    <scope>CATALYTIC ACTIVITY</scope>
    <scope>PROTEOLYTIC CLEAVAGE</scope>
    <scope>MUTAGENESIS OF 24-TYR-PHE-25; PHE-231; PHE-334 AND SER-541</scope>
    <scope>CHARACTERIZATION OF VARIANTS GCLEB SER-342 DEL AND GLY-528</scope>
    <scope>CHARACTERIZATION OF VARIANTS KCS2 HIS-511 AND HIS-569</scope>
</reference>
<reference key="10">
    <citation type="journal article" date="2021" name="EMBO Rep.">
        <title>FAM111A induces nuclear dysfunction in disease and viral restriction.</title>
        <authorList>
            <person name="Nie M."/>
            <person name="Oravcova M."/>
            <person name="Jami-Alahmadi Y."/>
            <person name="Wohlschlegel J.A."/>
            <person name="Lazzerini-Denchi E."/>
            <person name="Boddy M.N."/>
        </authorList>
    </citation>
    <scope>FUNCTION</scope>
    <scope>SUBCELLULAR LOCATION</scope>
    <scope>MUTAGENESIS OF SER-541</scope>
</reference>
<reference key="11">
    <citation type="journal article" date="2023" name="Proc. Natl. Acad. Sci. U.S.A.">
        <title>Human FAM111A inhibits vaccinia virus replication by degrading viral protein I3 and is antagonized by poxvirus host range factor SPI-1.</title>
        <authorList>
            <person name="Zhu J."/>
            <person name="Gao X."/>
            <person name="Li Y."/>
            <person name="Zhang Z."/>
            <person name="Xie S."/>
            <person name="Ren S."/>
            <person name="Li Y."/>
            <person name="Li H."/>
            <person name="Niu K."/>
            <person name="Fu S."/>
            <person name="Deng Y."/>
            <person name="Li Y."/>
            <person name="Moss B."/>
            <person name="Wu W."/>
            <person name="Peng C."/>
        </authorList>
    </citation>
    <scope>FUNCTION</scope>
    <scope>INDUCTION BY VIRAL INFECTION</scope>
    <scope>SUBCELLULAR LOCATION</scope>
    <scope>INTERACTION WITH VACCINIA VIRUS PROTEIN OPG079 (MICROBIAL INFECTION)</scope>
    <scope>MUTAGENESIS OF SER-541</scope>
</reference>
<reference key="12">
    <citation type="journal article" date="2013" name="Am. J. Hum. Genet.">
        <title>FAM111A mutations result in hypoparathyroidism and impaired skeletal development.</title>
        <authorList>
            <person name="Unger S."/>
            <person name="Gorna M.W."/>
            <person name="Le Bechec A."/>
            <person name="Do Vale-Pereira S."/>
            <person name="Bedeschi M.F."/>
            <person name="Geiberger S."/>
            <person name="Grigelioniene G."/>
            <person name="Horemuzova E."/>
            <person name="Lalatta F."/>
            <person name="Lausch E."/>
            <person name="Magnani C."/>
            <person name="Nampoothiri S."/>
            <person name="Nishimura G."/>
            <person name="Petrella D."/>
            <person name="Rojas-Ringeling F."/>
            <person name="Utsunomiya A."/>
            <person name="Zabel B."/>
            <person name="Pradervand S."/>
            <person name="Harshman K."/>
            <person name="Campos-Xavier B."/>
            <person name="Bonafe L."/>
            <person name="Superti-Furga G."/>
            <person name="Stevenson B."/>
            <person name="Superti-Furga A."/>
        </authorList>
    </citation>
    <scope>VARIANTS KCS2 HIS-511 AND HIS-569</scope>
    <scope>VARIANTS GCLEB ALA-338; SER-342 DEL; THR-527 AND GLY-528</scope>
</reference>
<reference key="13">
    <citation type="journal article" date="2014" name="Clin. Genet.">
        <title>Mother-to-daughter transmission of Kenny-Caffey syndrome associated with the recurrent, dominant FAM111A mutation p.Arg569His.</title>
        <authorList>
            <person name="Nikkel S."/>
            <person name="Ahmed A."/>
            <person name="Smith A."/>
            <person name="Marcadier J."/>
            <person name="Bulman D."/>
            <person name="Boycott K."/>
        </authorList>
    </citation>
    <scope>VARIANT KCS2 HIS-569</scope>
</reference>
<reference key="14">
    <citation type="journal article" date="2014" name="J. Bone Miner. Res.">
        <title>A recurrent de novo FAM111A mutation causes kenny-caffey syndrome type 2.</title>
        <authorList>
            <person name="Isojima T."/>
            <person name="Doi K."/>
            <person name="Mitsui J."/>
            <person name="Oda Y."/>
            <person name="Tokuhiro E."/>
            <person name="Yasoda A."/>
            <person name="Yorifuji T."/>
            <person name="Horikawa R."/>
            <person name="Yoshimura J."/>
            <person name="Ishiura H."/>
            <person name="Morishita S."/>
            <person name="Tsuji S."/>
            <person name="Kitanaka S."/>
        </authorList>
    </citation>
    <scope>VARIANT KCS2 HIS-569</scope>
</reference>
<feature type="chain" id="PRO_0000274407" description="Serine protease FAM111A">
    <location>
        <begin position="1"/>
        <end position="611"/>
    </location>
</feature>
<feature type="region of interest" description="Disordered" evidence="2">
    <location>
        <begin position="44"/>
        <end position="73"/>
    </location>
</feature>
<feature type="region of interest" description="Interaction with SV40 large T antigen" evidence="3">
    <location>
        <begin position="336"/>
        <end position="611"/>
    </location>
</feature>
<feature type="short sequence motif" description="PIP-box" evidence="6">
    <location>
        <begin position="16"/>
        <end position="28"/>
    </location>
</feature>
<feature type="active site" description="Charge relay system" evidence="1">
    <location>
        <position position="385"/>
    </location>
</feature>
<feature type="active site" description="Charge relay system" evidence="1">
    <location>
        <position position="439"/>
    </location>
</feature>
<feature type="active site" description="Charge relay system" evidence="14">
    <location>
        <position position="541"/>
    </location>
</feature>
<feature type="site" description="Cleavage; by autolysis" evidence="14">
    <location>
        <begin position="334"/>
        <end position="335"/>
    </location>
</feature>
<feature type="modified residue" description="Phosphoserine" evidence="16">
    <location>
        <position position="26"/>
    </location>
</feature>
<feature type="cross-link" description="Glycyl lysine isopeptide (Lys-Gly) (interchain with G-Cter in SUMO2)" evidence="17">
    <location>
        <position position="20"/>
    </location>
</feature>
<feature type="cross-link" description="Glycyl lysine isopeptide (Lys-Gly) (interchain with G-Cter in SUMO2)" evidence="17">
    <location>
        <position position="30"/>
    </location>
</feature>
<feature type="cross-link" description="Glycyl lysine isopeptide (Lys-Gly) (interchain with G-Cter in SUMO2)" evidence="17">
    <location>
        <position position="65"/>
    </location>
</feature>
<feature type="sequence variant" id="VAR_069513" description="In GCLEB; dbSNP:rs587777014." evidence="4">
    <original>T</original>
    <variation>A</variation>
    <location>
        <position position="338"/>
    </location>
</feature>
<feature type="sequence variant" id="VAR_069514" description="In GCLEB; enhanced autocatalytic cleavage." evidence="4 8">
    <location>
        <position position="342"/>
    </location>
</feature>
<feature type="sequence variant" id="VAR_069515" description="In KCS2; enhanced autocatalytic cleavage; dbSNP:rs587777012." evidence="4 8">
    <original>Y</original>
    <variation>H</variation>
    <location>
        <position position="511"/>
    </location>
</feature>
<feature type="sequence variant" id="VAR_069516" description="In GCLEB; dbSNP:rs587777015." evidence="4">
    <original>P</original>
    <variation>T</variation>
    <location>
        <position position="527"/>
    </location>
</feature>
<feature type="sequence variant" id="VAR_069517" description="In GCLEB; enhanced autocatalytic cleavage; dbSNP:rs587777013." evidence="4 8">
    <original>D</original>
    <variation>G</variation>
    <location>
        <position position="528"/>
    </location>
</feature>
<feature type="sequence variant" id="VAR_069518" description="In KCS2; enhanced autocatalytic cleavage; dbSNP:rs587777011." evidence="4 5 7 8">
    <original>R</original>
    <variation>H</variation>
    <location>
        <position position="569"/>
    </location>
</feature>
<feature type="mutagenesis site" description="In PIPmt; affects subcellular localization. Impaired PCNA stability and chromatin binding. Does not affect protease activity." evidence="6 8">
    <original>YF</original>
    <variation>AA</variation>
    <location>
        <begin position="24"/>
        <end position="25"/>
    </location>
</feature>
<feature type="mutagenesis site" description="Strongly decreased single-stranded DNA-binding." evidence="8">
    <original>F</original>
    <variation>A</variation>
    <location>
        <position position="231"/>
    </location>
</feature>
<feature type="mutagenesis site" description="Abolished autocatalytic cleavage." evidence="8">
    <original>F</original>
    <variation>R</variation>
    <variation>G</variation>
    <location>
        <position position="334"/>
    </location>
</feature>
<feature type="mutagenesis site" description="Abolished protease activity." evidence="8 9 10">
    <original>S</original>
    <variation>A</variation>
    <location>
        <position position="541"/>
    </location>
</feature>
<feature type="sequence conflict" description="In Ref. 4; AAH71759." evidence="13" ref="4">
    <original>T</original>
    <variation>S</variation>
    <location>
        <position position="97"/>
    </location>
</feature>
<gene>
    <name evidence="12 15" type="primary">FAM111A</name>
    <name evidence="11" type="synonym">KIAA1895</name>
</gene>
<protein>
    <recommendedName>
        <fullName evidence="13">Serine protease FAM111A</fullName>
        <ecNumber evidence="8">3.4.21.-</ecNumber>
    </recommendedName>
</protein>
<name>F111A_HUMAN</name>
<comment type="function">
    <text evidence="6 8 10">Single-stranded DNA-binding serine protease that mediates the proteolytic cleavage of covalent DNA-protein cross-links (DPCs) during DNA synthesis, thereby playing a key role in maintaining genomic integrity (PubMed:32165630). DPCs are highly toxic DNA lesions that interfere with essential chromatin transactions, such as replication and transcription, and which are induced by reactive agents, such as UV light or formaldehyde (PubMed:32165630). Protects replication fork from stalling by removing DPCs, such as covalently trapped topoisomerase 1 (TOP1) adducts on DNA lesion, or poly(ADP-ribose) polymerase 1 (PARP1)-DNA complexes trapped by PARP inhibitors (PubMed:32165630). Required for PCNA loading on replication sites (PubMed:24561620). Promotes S-phase entry and DNA synthesis (PubMed:24561620). Also acts as a restriction factor for some viruses including SV40 polyomavirus and vaccinia virus (PubMed:23093934, PubMed:37607234). Mechanistically, affects nuclear barrier function during viral replication by mediating the disruption of the nuclear pore complex (NPC) via its protease activity (PubMed:33369867, PubMed:37607234). In turn, interacts with vaccinia virus DNA-binding protein OPG079 in the cytoplasm and promotes its degradation without the need of its protease activity but through autophagy (PubMed:37607234).</text>
</comment>
<comment type="subunit">
    <text evidence="6">Interacts (via PIP-box) with PCNA; then interaction is direct.</text>
</comment>
<comment type="subunit">
    <text evidence="3">(Microbial infection) Interacts with SV40 virus large T antigen and this interaction is required for efficient viral replication and sustained viral gene expression in restrictive cell types.</text>
</comment>
<comment type="subunit">
    <text evidence="10">(Microbial infection) Interacts with vaccinia virus protein OPG079; this interaction promotes the degradation of OPG079.</text>
</comment>
<comment type="subcellular location">
    <subcellularLocation>
        <location evidence="3 6 10">Nucleus</location>
    </subcellularLocation>
    <subcellularLocation>
        <location evidence="6">Chromosome</location>
    </subcellularLocation>
    <subcellularLocation>
        <location evidence="3 10">Cytoplasm</location>
    </subcellularLocation>
    <text evidence="6">Mainly localizes to nucleus: colocalizes with PCNA on replication sites.</text>
</comment>
<comment type="induction">
    <text evidence="3 10">Regulated in a cell cycle dependent manner with the lowest expression during G0 or the quiescent phase and with peak expression during G2/M phase (at protein level) (PubMed:23093934). Upon virus infection via the cGAS-STING signaling pathway (PubMed:37607234).</text>
</comment>
<comment type="domain">
    <text evidence="6">The PIP-box mediates the interaction with PCNA.</text>
</comment>
<comment type="PTM">
    <text evidence="8">Autocatalytically cleaved; activating the protein (PubMed:32165630). Autocatalytic cleavage takes place in trans (PubMed:32165630).</text>
</comment>
<comment type="disease" evidence="4 5 7 8">
    <disease id="DI-03711">
        <name>Kenny-Caffey syndrome 2</name>
        <acronym>KCS2</acronym>
        <description>A disorder characterized by impaired skeletal development with small and dense bones, short stature, and primary hypoparathyroidism with hypocalcemia. Clinical features include cortical thickening and medullary stenosis of the tubular bones, delayed closure of fontanels, defective dentition, small eyes with hypermetropia, and frontal bossing with a triangular face.</description>
        <dbReference type="MIM" id="127000"/>
    </disease>
    <text>The disease is caused by variants affecting the gene represented in this entry.</text>
</comment>
<comment type="disease" evidence="4 8">
    <disease id="DI-03712">
        <name>Gracile bone dysplasia</name>
        <acronym>GCLEB</acronym>
        <description>A perinatally lethal condition characterized by narrowing of the medullary cavity of the long bones and of the skull, gracile bones with thin diaphyses, premature closure of basal cranial sutures, and microphthalmia. Most affected individuals who survive beyond the perinatal period develop hypocalcemia with low parathyroid hormone levels.</description>
        <dbReference type="MIM" id="602361"/>
    </disease>
    <text>The disease is caused by variants affecting the gene represented in this entry.</text>
</comment>
<comment type="similarity">
    <text evidence="13">Belongs to the FAM111 family.</text>
</comment>
<comment type="sequence caution" evidence="13">
    <conflict type="erroneous initiation">
        <sequence resource="EMBL-CDS" id="BAB15486"/>
    </conflict>
    <text>Truncated N-terminus.</text>
</comment>
<comment type="sequence caution" evidence="13">
    <conflict type="erroneous initiation">
        <sequence resource="EMBL-CDS" id="BAB67788"/>
    </conflict>
    <text>Extended N-terminus.</text>
</comment>
<evidence type="ECO:0000250" key="1">
    <source>
        <dbReference type="UniProtKB" id="P06681"/>
    </source>
</evidence>
<evidence type="ECO:0000256" key="2">
    <source>
        <dbReference type="SAM" id="MobiDB-lite"/>
    </source>
</evidence>
<evidence type="ECO:0000269" key="3">
    <source>
    </source>
</evidence>
<evidence type="ECO:0000269" key="4">
    <source>
    </source>
</evidence>
<evidence type="ECO:0000269" key="5">
    <source>
    </source>
</evidence>
<evidence type="ECO:0000269" key="6">
    <source>
    </source>
</evidence>
<evidence type="ECO:0000269" key="7">
    <source>
    </source>
</evidence>
<evidence type="ECO:0000269" key="8">
    <source>
    </source>
</evidence>
<evidence type="ECO:0000269" key="9">
    <source>
    </source>
</evidence>
<evidence type="ECO:0000269" key="10">
    <source>
    </source>
</evidence>
<evidence type="ECO:0000303" key="11">
    <source>
    </source>
</evidence>
<evidence type="ECO:0000303" key="12">
    <source>
    </source>
</evidence>
<evidence type="ECO:0000305" key="13"/>
<evidence type="ECO:0000305" key="14">
    <source>
    </source>
</evidence>
<evidence type="ECO:0000312" key="15">
    <source>
        <dbReference type="HGNC" id="HGNC:24725"/>
    </source>
</evidence>
<evidence type="ECO:0007744" key="16">
    <source>
    </source>
</evidence>
<evidence type="ECO:0007744" key="17">
    <source>
    </source>
</evidence>
<proteinExistence type="evidence at protein level"/>
<dbReference type="EC" id="3.4.21.-" evidence="8"/>
<dbReference type="EMBL" id="AB067482">
    <property type="protein sequence ID" value="BAB67788.1"/>
    <property type="status" value="ALT_INIT"/>
    <property type="molecule type" value="mRNA"/>
</dbReference>
<dbReference type="EMBL" id="AK026447">
    <property type="protein sequence ID" value="BAB15486.1"/>
    <property type="status" value="ALT_INIT"/>
    <property type="molecule type" value="mRNA"/>
</dbReference>
<dbReference type="EMBL" id="AK291453">
    <property type="protein sequence ID" value="BAF84142.1"/>
    <property type="molecule type" value="mRNA"/>
</dbReference>
<dbReference type="EMBL" id="CR749358">
    <property type="protein sequence ID" value="CAH18211.1"/>
    <property type="molecule type" value="mRNA"/>
</dbReference>
<dbReference type="EMBL" id="BC013137">
    <property type="protein sequence ID" value="AAH13137.1"/>
    <property type="molecule type" value="mRNA"/>
</dbReference>
<dbReference type="EMBL" id="BC054515">
    <property type="protein sequence ID" value="AAH54515.1"/>
    <property type="molecule type" value="mRNA"/>
</dbReference>
<dbReference type="EMBL" id="BC071759">
    <property type="protein sequence ID" value="AAH71759.1"/>
    <property type="molecule type" value="mRNA"/>
</dbReference>
<dbReference type="CCDS" id="CCDS7973.1"/>
<dbReference type="RefSeq" id="NP_001135991.1">
    <property type="nucleotide sequence ID" value="NM_001142519.3"/>
</dbReference>
<dbReference type="RefSeq" id="NP_001135992.1">
    <property type="nucleotide sequence ID" value="NM_001142520.3"/>
</dbReference>
<dbReference type="RefSeq" id="NP_001135993.1">
    <property type="nucleotide sequence ID" value="NM_001142521.3"/>
</dbReference>
<dbReference type="RefSeq" id="NP_001299838.1">
    <property type="nucleotide sequence ID" value="NM_001312909.2"/>
</dbReference>
<dbReference type="RefSeq" id="NP_001299839.1">
    <property type="nucleotide sequence ID" value="NM_001312910.2"/>
</dbReference>
<dbReference type="RefSeq" id="NP_001299840.1">
    <property type="nucleotide sequence ID" value="NM_001312911.2"/>
</dbReference>
<dbReference type="RefSeq" id="NP_001356386.1">
    <property type="nucleotide sequence ID" value="NM_001369457.1"/>
</dbReference>
<dbReference type="RefSeq" id="NP_001361733.1">
    <property type="nucleotide sequence ID" value="NM_001374804.1"/>
</dbReference>
<dbReference type="RefSeq" id="NP_001361777.1">
    <property type="nucleotide sequence ID" value="NM_001374848.1"/>
</dbReference>
<dbReference type="RefSeq" id="NP_001361778.1">
    <property type="nucleotide sequence ID" value="NM_001374849.1"/>
</dbReference>
<dbReference type="RefSeq" id="NP_001361779.1">
    <property type="nucleotide sequence ID" value="NM_001374850.1"/>
</dbReference>
<dbReference type="RefSeq" id="NP_001361780.1">
    <property type="nucleotide sequence ID" value="NM_001374851.1"/>
</dbReference>
<dbReference type="RefSeq" id="NP_001361781.1">
    <property type="nucleotide sequence ID" value="NM_001374852.1"/>
</dbReference>
<dbReference type="RefSeq" id="NP_001361782.1">
    <property type="nucleotide sequence ID" value="NM_001374853.1"/>
</dbReference>
<dbReference type="RefSeq" id="NP_001361783.1">
    <property type="nucleotide sequence ID" value="NM_001374854.1"/>
</dbReference>
<dbReference type="RefSeq" id="NP_001361784.1">
    <property type="nucleotide sequence ID" value="NM_001374855.1"/>
</dbReference>
<dbReference type="RefSeq" id="NP_001361785.1">
    <property type="nucleotide sequence ID" value="NM_001374856.1"/>
</dbReference>
<dbReference type="RefSeq" id="NP_001361786.1">
    <property type="nucleotide sequence ID" value="NM_001374857.1"/>
</dbReference>
<dbReference type="RefSeq" id="NP_001361787.1">
    <property type="nucleotide sequence ID" value="NM_001374858.1"/>
</dbReference>
<dbReference type="RefSeq" id="NP_001361788.1">
    <property type="nucleotide sequence ID" value="NM_001374859.1"/>
</dbReference>
<dbReference type="RefSeq" id="NP_001361789.1">
    <property type="nucleotide sequence ID" value="NM_001374860.1"/>
</dbReference>
<dbReference type="RefSeq" id="NP_001361790.1">
    <property type="nucleotide sequence ID" value="NM_001374861.1"/>
</dbReference>
<dbReference type="RefSeq" id="NP_001361791.1">
    <property type="nucleotide sequence ID" value="NM_001374862.1"/>
</dbReference>
<dbReference type="RefSeq" id="NP_001361792.1">
    <property type="nucleotide sequence ID" value="NM_001374863.1"/>
</dbReference>
<dbReference type="RefSeq" id="NP_001361793.1">
    <property type="nucleotide sequence ID" value="NM_001374864.1"/>
</dbReference>
<dbReference type="RefSeq" id="NP_001361794.1">
    <property type="nucleotide sequence ID" value="NM_001374865.1"/>
</dbReference>
<dbReference type="RefSeq" id="NP_001361795.1">
    <property type="nucleotide sequence ID" value="NM_001374866.1"/>
</dbReference>
<dbReference type="RefSeq" id="NP_001361796.1">
    <property type="nucleotide sequence ID" value="NM_001374867.1"/>
</dbReference>
<dbReference type="RefSeq" id="NP_001361797.1">
    <property type="nucleotide sequence ID" value="NM_001374868.1"/>
</dbReference>
<dbReference type="RefSeq" id="NP_001361798.1">
    <property type="nucleotide sequence ID" value="NM_001374869.1"/>
</dbReference>
<dbReference type="RefSeq" id="NP_001361799.1">
    <property type="nucleotide sequence ID" value="NM_001374870.1"/>
</dbReference>
<dbReference type="RefSeq" id="NP_071357.2">
    <property type="nucleotide sequence ID" value="NM_022074.3"/>
</dbReference>
<dbReference type="RefSeq" id="NP_942144.1">
    <property type="nucleotide sequence ID" value="NM_198847.3"/>
</dbReference>
<dbReference type="PDB" id="8S9K">
    <property type="method" value="X-ray"/>
    <property type="resolution" value="2.72 A"/>
    <property type="chains" value="A/B/C/D=335-611"/>
</dbReference>
<dbReference type="PDB" id="8S9L">
    <property type="method" value="X-ray"/>
    <property type="resolution" value="1.85 A"/>
    <property type="chains" value="A/B=345-611"/>
</dbReference>
<dbReference type="PDBsum" id="8S9K"/>
<dbReference type="PDBsum" id="8S9L"/>
<dbReference type="SMR" id="Q96PZ2"/>
<dbReference type="BioGRID" id="121979">
    <property type="interactions" value="96"/>
</dbReference>
<dbReference type="FunCoup" id="Q96PZ2">
    <property type="interactions" value="1609"/>
</dbReference>
<dbReference type="IntAct" id="Q96PZ2">
    <property type="interactions" value="57"/>
</dbReference>
<dbReference type="MINT" id="Q96PZ2"/>
<dbReference type="STRING" id="9606.ENSP00000434435"/>
<dbReference type="MEROPS" id="S01.530"/>
<dbReference type="GlyGen" id="Q96PZ2">
    <property type="glycosylation" value="1 site, 1 O-linked glycan (1 site)"/>
</dbReference>
<dbReference type="iPTMnet" id="Q96PZ2"/>
<dbReference type="MetOSite" id="Q96PZ2"/>
<dbReference type="PhosphoSitePlus" id="Q96PZ2"/>
<dbReference type="SwissPalm" id="Q96PZ2"/>
<dbReference type="BioMuta" id="FAM111A"/>
<dbReference type="DMDM" id="125991848"/>
<dbReference type="jPOST" id="Q96PZ2"/>
<dbReference type="MassIVE" id="Q96PZ2"/>
<dbReference type="PaxDb" id="9606-ENSP00000434435"/>
<dbReference type="PeptideAtlas" id="Q96PZ2"/>
<dbReference type="ProteomicsDB" id="77794"/>
<dbReference type="Pumba" id="Q96PZ2"/>
<dbReference type="Antibodypedia" id="27720">
    <property type="antibodies" value="47 antibodies from 13 providers"/>
</dbReference>
<dbReference type="DNASU" id="63901"/>
<dbReference type="Ensembl" id="ENST00000361723.7">
    <property type="protein sequence ID" value="ENSP00000355264.3"/>
    <property type="gene ID" value="ENSG00000166801.17"/>
</dbReference>
<dbReference type="Ensembl" id="ENST00000420244.6">
    <property type="protein sequence ID" value="ENSP00000406683.1"/>
    <property type="gene ID" value="ENSG00000166801.17"/>
</dbReference>
<dbReference type="Ensembl" id="ENST00000527629.6">
    <property type="protein sequence ID" value="ENSP00000436128.2"/>
    <property type="gene ID" value="ENSG00000166801.17"/>
</dbReference>
<dbReference type="Ensembl" id="ENST00000528737.5">
    <property type="protein sequence ID" value="ENSP00000434435.1"/>
    <property type="gene ID" value="ENSG00000166801.17"/>
</dbReference>
<dbReference type="Ensembl" id="ENST00000529985.3">
    <property type="protein sequence ID" value="ENSP00000502754.2"/>
    <property type="gene ID" value="ENSG00000166801.17"/>
</dbReference>
<dbReference type="Ensembl" id="ENST00000531147.1">
    <property type="protein sequence ID" value="ENSP00000431631.1"/>
    <property type="gene ID" value="ENSG00000166801.17"/>
</dbReference>
<dbReference type="Ensembl" id="ENST00000531408.6">
    <property type="protein sequence ID" value="ENSP00000432821.2"/>
    <property type="gene ID" value="ENSG00000166801.17"/>
</dbReference>
<dbReference type="Ensembl" id="ENST00000533703.1">
    <property type="protein sequence ID" value="ENSP00000433154.1"/>
    <property type="gene ID" value="ENSG00000166801.17"/>
</dbReference>
<dbReference type="Ensembl" id="ENST00000674617.1">
    <property type="protein sequence ID" value="ENSP00000501786.1"/>
    <property type="gene ID" value="ENSG00000166801.17"/>
</dbReference>
<dbReference type="Ensembl" id="ENST00000675163.1">
    <property type="protein sequence ID" value="ENSP00000501952.1"/>
    <property type="gene ID" value="ENSG00000166801.17"/>
</dbReference>
<dbReference type="Ensembl" id="ENST00000675806.2">
    <property type="protein sequence ID" value="ENSP00000501617.2"/>
    <property type="gene ID" value="ENSG00000166801.17"/>
</dbReference>
<dbReference type="Ensembl" id="ENST00000676340.1">
    <property type="protein sequence ID" value="ENSP00000501909.1"/>
    <property type="gene ID" value="ENSG00000166801.17"/>
</dbReference>
<dbReference type="Ensembl" id="ENST00000676459.1">
    <property type="protein sequence ID" value="ENSP00000501771.1"/>
    <property type="gene ID" value="ENSG00000166801.17"/>
</dbReference>
<dbReference type="Ensembl" id="ENST00000682018.1">
    <property type="protein sequence ID" value="ENSP00000507215.1"/>
    <property type="gene ID" value="ENSG00000166801.17"/>
</dbReference>
<dbReference type="GeneID" id="63901"/>
<dbReference type="KEGG" id="hsa:63901"/>
<dbReference type="MANE-Select" id="ENST00000675163.1">
    <property type="protein sequence ID" value="ENSP00000501952.1"/>
    <property type="RefSeq nucleotide sequence ID" value="NM_001312909.2"/>
    <property type="RefSeq protein sequence ID" value="NP_001299838.1"/>
</dbReference>
<dbReference type="UCSC" id="uc001nno.4">
    <property type="organism name" value="human"/>
</dbReference>
<dbReference type="AGR" id="HGNC:24725"/>
<dbReference type="CTD" id="63901"/>
<dbReference type="DisGeNET" id="63901"/>
<dbReference type="GeneCards" id="FAM111A"/>
<dbReference type="GeneReviews" id="FAM111A"/>
<dbReference type="HGNC" id="HGNC:24725">
    <property type="gene designation" value="FAM111A"/>
</dbReference>
<dbReference type="HPA" id="ENSG00000166801">
    <property type="expression patterns" value="Low tissue specificity"/>
</dbReference>
<dbReference type="MalaCards" id="FAM111A"/>
<dbReference type="MIM" id="127000">
    <property type="type" value="phenotype"/>
</dbReference>
<dbReference type="MIM" id="602361">
    <property type="type" value="phenotype"/>
</dbReference>
<dbReference type="MIM" id="615292">
    <property type="type" value="gene"/>
</dbReference>
<dbReference type="neXtProt" id="NX_Q96PZ2"/>
<dbReference type="OpenTargets" id="ENSG00000166801"/>
<dbReference type="Orphanet" id="93325">
    <property type="disease" value="Autosomal dominant Kenny-Caffey syndrome"/>
</dbReference>
<dbReference type="Orphanet" id="2763">
    <property type="disease" value="Osteocraniostenosis"/>
</dbReference>
<dbReference type="PharmGKB" id="PA143485468"/>
<dbReference type="VEuPathDB" id="HostDB:ENSG00000166801"/>
<dbReference type="eggNOG" id="KOG0866">
    <property type="taxonomic scope" value="Eukaryota"/>
</dbReference>
<dbReference type="GeneTree" id="ENSGT00390000005182"/>
<dbReference type="HOGENOM" id="CLU_022719_0_0_1"/>
<dbReference type="InParanoid" id="Q96PZ2"/>
<dbReference type="OMA" id="KEGCKLC"/>
<dbReference type="OrthoDB" id="10025068at2759"/>
<dbReference type="PAN-GO" id="Q96PZ2">
    <property type="GO annotations" value="3 GO annotations based on evolutionary models"/>
</dbReference>
<dbReference type="PhylomeDB" id="Q96PZ2"/>
<dbReference type="TreeFam" id="TF332538"/>
<dbReference type="PathwayCommons" id="Q96PZ2"/>
<dbReference type="SignaLink" id="Q96PZ2"/>
<dbReference type="BioGRID-ORCS" id="63901">
    <property type="hits" value="10 hits in 1161 CRISPR screens"/>
</dbReference>
<dbReference type="ChiTaRS" id="FAM111A">
    <property type="organism name" value="human"/>
</dbReference>
<dbReference type="GenomeRNAi" id="63901"/>
<dbReference type="Pharos" id="Q96PZ2">
    <property type="development level" value="Tbio"/>
</dbReference>
<dbReference type="PRO" id="PR:Q96PZ2"/>
<dbReference type="Proteomes" id="UP000005640">
    <property type="component" value="Chromosome 11"/>
</dbReference>
<dbReference type="RNAct" id="Q96PZ2">
    <property type="molecule type" value="protein"/>
</dbReference>
<dbReference type="Bgee" id="ENSG00000166801">
    <property type="expression patterns" value="Expressed in monocyte and 190 other cell types or tissues"/>
</dbReference>
<dbReference type="ExpressionAtlas" id="Q96PZ2">
    <property type="expression patterns" value="baseline and differential"/>
</dbReference>
<dbReference type="GO" id="GO:0000785">
    <property type="term" value="C:chromatin"/>
    <property type="evidence" value="ECO:0000314"/>
    <property type="project" value="UniProtKB"/>
</dbReference>
<dbReference type="GO" id="GO:0005737">
    <property type="term" value="C:cytoplasm"/>
    <property type="evidence" value="ECO:0000314"/>
    <property type="project" value="UniProtKB"/>
</dbReference>
<dbReference type="GO" id="GO:0001650">
    <property type="term" value="C:fibrillar center"/>
    <property type="evidence" value="ECO:0000314"/>
    <property type="project" value="HPA"/>
</dbReference>
<dbReference type="GO" id="GO:0005654">
    <property type="term" value="C:nucleoplasm"/>
    <property type="evidence" value="ECO:0000314"/>
    <property type="project" value="HPA"/>
</dbReference>
<dbReference type="GO" id="GO:0005634">
    <property type="term" value="C:nucleus"/>
    <property type="evidence" value="ECO:0000314"/>
    <property type="project" value="UniProtKB"/>
</dbReference>
<dbReference type="GO" id="GO:0008233">
    <property type="term" value="F:peptidase activity"/>
    <property type="evidence" value="ECO:0007669"/>
    <property type="project" value="UniProtKB-KW"/>
</dbReference>
<dbReference type="GO" id="GO:0003697">
    <property type="term" value="F:single-stranded DNA binding"/>
    <property type="evidence" value="ECO:0000314"/>
    <property type="project" value="UniProtKB"/>
</dbReference>
<dbReference type="GO" id="GO:0006974">
    <property type="term" value="P:DNA damage response"/>
    <property type="evidence" value="ECO:0000314"/>
    <property type="project" value="UniProtKB"/>
</dbReference>
<dbReference type="GO" id="GO:0006260">
    <property type="term" value="P:DNA replication"/>
    <property type="evidence" value="ECO:0000315"/>
    <property type="project" value="UniProtKB"/>
</dbReference>
<dbReference type="GO" id="GO:0045071">
    <property type="term" value="P:negative regulation of viral genome replication"/>
    <property type="evidence" value="ECO:0000315"/>
    <property type="project" value="UniProtKB"/>
</dbReference>
<dbReference type="GO" id="GO:0016540">
    <property type="term" value="P:protein autoprocessing"/>
    <property type="evidence" value="ECO:0000314"/>
    <property type="project" value="UniProtKB"/>
</dbReference>
<dbReference type="GO" id="GO:0106300">
    <property type="term" value="P:protein-DNA covalent cross-linking repair"/>
    <property type="evidence" value="ECO:0000314"/>
    <property type="project" value="UniProtKB"/>
</dbReference>
<dbReference type="GO" id="GO:0006508">
    <property type="term" value="P:proteolysis"/>
    <property type="evidence" value="ECO:0000314"/>
    <property type="project" value="UniProtKB"/>
</dbReference>
<dbReference type="GO" id="GO:0031297">
    <property type="term" value="P:replication fork processing"/>
    <property type="evidence" value="ECO:0000314"/>
    <property type="project" value="UniProtKB"/>
</dbReference>
<dbReference type="Gene3D" id="2.40.10.10">
    <property type="entry name" value="Trypsin-like serine proteases"/>
    <property type="match status" value="1"/>
</dbReference>
<dbReference type="InterPro" id="IPR009003">
    <property type="entry name" value="Peptidase_S1_PA"/>
</dbReference>
<dbReference type="InterPro" id="IPR043504">
    <property type="entry name" value="Peptidase_S1_PA_chymotrypsin"/>
</dbReference>
<dbReference type="PANTHER" id="PTHR14389:SF14">
    <property type="entry name" value="SERINE PROTEASE FAM111A"/>
    <property type="match status" value="1"/>
</dbReference>
<dbReference type="PANTHER" id="PTHR14389">
    <property type="entry name" value="SI:CH1073-475A24.1"/>
    <property type="match status" value="1"/>
</dbReference>
<dbReference type="Pfam" id="PF13365">
    <property type="entry name" value="Trypsin_2"/>
    <property type="match status" value="1"/>
</dbReference>
<dbReference type="SUPFAM" id="SSF50494">
    <property type="entry name" value="Trypsin-like serine proteases"/>
    <property type="match status" value="1"/>
</dbReference>